<dbReference type="EMBL" id="DQ176639">
    <property type="protein sequence ID" value="ABA06436.1"/>
    <property type="molecule type" value="mRNA"/>
</dbReference>
<dbReference type="RefSeq" id="NP_001029065.1">
    <property type="nucleotide sequence ID" value="NM_001033893.1"/>
</dbReference>
<dbReference type="RefSeq" id="XP_006246315.1">
    <property type="nucleotide sequence ID" value="XM_006246253.3"/>
</dbReference>
<dbReference type="RefSeq" id="XP_008765903.1">
    <property type="nucleotide sequence ID" value="XM_008767681.4"/>
</dbReference>
<dbReference type="RefSeq" id="XP_017459544.1">
    <property type="nucleotide sequence ID" value="XM_017604055.1"/>
</dbReference>
<dbReference type="SMR" id="Q3LUD3"/>
<dbReference type="FunCoup" id="Q3LUD3">
    <property type="interactions" value="143"/>
</dbReference>
<dbReference type="STRING" id="10116.ENSRNOP00000030035"/>
<dbReference type="PhosphoSitePlus" id="Q3LUD3"/>
<dbReference type="PaxDb" id="10116-ENSRNOP00000030035"/>
<dbReference type="Ensembl" id="ENSRNOT00000032386.4">
    <property type="protein sequence ID" value="ENSRNOP00000030035.2"/>
    <property type="gene ID" value="ENSRNOG00000021731.4"/>
</dbReference>
<dbReference type="GeneID" id="303112"/>
<dbReference type="KEGG" id="rno:303112"/>
<dbReference type="UCSC" id="RGD:1308356">
    <property type="organism name" value="rat"/>
</dbReference>
<dbReference type="AGR" id="RGD:1308356"/>
<dbReference type="CTD" id="23138"/>
<dbReference type="RGD" id="1308356">
    <property type="gene designation" value="N4bp3"/>
</dbReference>
<dbReference type="eggNOG" id="ENOG502QVNK">
    <property type="taxonomic scope" value="Eukaryota"/>
</dbReference>
<dbReference type="GeneTree" id="ENSGT00940000158603"/>
<dbReference type="HOGENOM" id="CLU_026379_3_1_1"/>
<dbReference type="InParanoid" id="Q3LUD3"/>
<dbReference type="OMA" id="FSCKSMA"/>
<dbReference type="OrthoDB" id="10030037at2759"/>
<dbReference type="PhylomeDB" id="Q3LUD3"/>
<dbReference type="TreeFam" id="TF331420"/>
<dbReference type="PRO" id="PR:Q3LUD3"/>
<dbReference type="Proteomes" id="UP000002494">
    <property type="component" value="Chromosome 10"/>
</dbReference>
<dbReference type="Bgee" id="ENSRNOG00000021731">
    <property type="expression patterns" value="Expressed in ovary and 19 other cell types or tissues"/>
</dbReference>
<dbReference type="GO" id="GO:0030424">
    <property type="term" value="C:axon"/>
    <property type="evidence" value="ECO:0007669"/>
    <property type="project" value="UniProtKB-SubCell"/>
</dbReference>
<dbReference type="GO" id="GO:0031410">
    <property type="term" value="C:cytoplasmic vesicle"/>
    <property type="evidence" value="ECO:0000266"/>
    <property type="project" value="RGD"/>
</dbReference>
<dbReference type="GO" id="GO:0030425">
    <property type="term" value="C:dendrite"/>
    <property type="evidence" value="ECO:0007669"/>
    <property type="project" value="UniProtKB-SubCell"/>
</dbReference>
<dbReference type="GO" id="GO:0045087">
    <property type="term" value="P:innate immune response"/>
    <property type="evidence" value="ECO:0000266"/>
    <property type="project" value="RGD"/>
</dbReference>
<dbReference type="GO" id="GO:0007399">
    <property type="term" value="P:nervous system development"/>
    <property type="evidence" value="ECO:0007669"/>
    <property type="project" value="UniProtKB-KW"/>
</dbReference>
<dbReference type="InterPro" id="IPR033571">
    <property type="entry name" value="N4BP3"/>
</dbReference>
<dbReference type="PANTHER" id="PTHR32274">
    <property type="entry name" value="NEDD4-BINDING PROTEIN 3"/>
    <property type="match status" value="1"/>
</dbReference>
<dbReference type="PANTHER" id="PTHR32274:SF1">
    <property type="entry name" value="NEDD4-BINDING PROTEIN 3"/>
    <property type="match status" value="1"/>
</dbReference>
<dbReference type="Pfam" id="PF06818">
    <property type="entry name" value="Fez1"/>
    <property type="match status" value="2"/>
</dbReference>
<reference evidence="6" key="1">
    <citation type="journal article" date="2006" name="J. Biol. Chem.">
        <title>ProSAP-interacting protein 1 (ProSAPiP1), a novel protein of the postsynaptic density that links the spine-associated Rap-Gap (SPAR) to the scaffolding protein ProSAP2/Shank3.</title>
        <authorList>
            <person name="Wendholt D."/>
            <person name="Spilker C."/>
            <person name="Schmitt A."/>
            <person name="Dolnik A."/>
            <person name="Smalla K.H."/>
            <person name="Proepper C."/>
            <person name="Bockmann J."/>
            <person name="Sobue K."/>
            <person name="Gundelfinger E.D."/>
            <person name="Kreutz M.R."/>
            <person name="Boeckers T.M."/>
        </authorList>
    </citation>
    <scope>NUCLEOTIDE SEQUENCE [MRNA]</scope>
    <source>
        <tissue evidence="6">Brain</tissue>
    </source>
</reference>
<reference key="2">
    <citation type="journal article" date="2013" name="Neural Dev.">
        <title>The Nedd4-binding protein 3 (N4BP3) is crucial for axonal and dendritic branching in developing neurons.</title>
        <authorList>
            <person name="Schmeisser M.J."/>
            <person name="Kuehl S.J."/>
            <person name="Schoen M."/>
            <person name="Beth N.H."/>
            <person name="Weis T.M."/>
            <person name="Grabrucker A.M."/>
            <person name="Kuehl M."/>
            <person name="Boeckers T.M."/>
        </authorList>
    </citation>
    <scope>FUNCTION</scope>
    <scope>SUBCELLULAR LOCATION</scope>
</reference>
<comment type="function">
    <text evidence="1 4">Plays a positive role in the antiviral innate immune signaling pathway. Mechanistically, interacts with MAVS and functions as a positive regulator to promote 'Lys-63'-linked polyubiquitination of MAVS and thus strengthens the interaction between MAVS and TRAF2 (By similarity). Also plays a role in axon and dendrite arborization during cranial nerve development (PubMed:24044555). May also be important for neural crest migration and early development of other anterior structures including eye, brain and cranial cartilage (PubMed:24044555).</text>
</comment>
<comment type="subunit">
    <text evidence="1">Binds NEDD4. Interacts with 14-3-3 proteins. Interacts with MAVS.</text>
</comment>
<comment type="subcellular location">
    <subcellularLocation>
        <location evidence="4">Cytoplasmic vesicle</location>
    </subcellularLocation>
    <subcellularLocation>
        <location evidence="4">Cell projection</location>
        <location evidence="4">Axon</location>
    </subcellularLocation>
    <subcellularLocation>
        <location evidence="4">Cell projection</location>
        <location evidence="4">Dendrite</location>
    </subcellularLocation>
    <text evidence="4">In developing neurons, accumulates in early growth cones and at branching points of axons and dendrites.</text>
</comment>
<comment type="similarity">
    <text evidence="5">Belongs to the N4BP3 family.</text>
</comment>
<feature type="chain" id="PRO_0000397910" description="Nedd4 binding protein 3">
    <location>
        <begin position="1"/>
        <end position="537"/>
    </location>
</feature>
<feature type="region of interest" description="Disordered" evidence="3">
    <location>
        <begin position="173"/>
        <end position="234"/>
    </location>
</feature>
<feature type="region of interest" description="Disordered" evidence="3">
    <location>
        <begin position="327"/>
        <end position="359"/>
    </location>
</feature>
<feature type="region of interest" description="Disordered" evidence="3">
    <location>
        <begin position="422"/>
        <end position="456"/>
    </location>
</feature>
<feature type="coiled-coil region" evidence="2">
    <location>
        <begin position="295"/>
        <end position="523"/>
    </location>
</feature>
<feature type="compositionally biased region" description="Low complexity" evidence="3">
    <location>
        <begin position="178"/>
        <end position="207"/>
    </location>
</feature>
<feature type="modified residue" description="Phosphoserine" evidence="1">
    <location>
        <position position="172"/>
    </location>
</feature>
<gene>
    <name evidence="7" type="primary">N4bp3</name>
</gene>
<proteinExistence type="evidence at transcript level"/>
<accession>Q3LUD3</accession>
<keyword id="KW-0966">Cell projection</keyword>
<keyword id="KW-0175">Coiled coil</keyword>
<keyword id="KW-0968">Cytoplasmic vesicle</keyword>
<keyword id="KW-0217">Developmental protein</keyword>
<keyword id="KW-0524">Neurogenesis</keyword>
<keyword id="KW-0597">Phosphoprotein</keyword>
<keyword id="KW-1185">Reference proteome</keyword>
<name>N4BP3_RAT</name>
<organism>
    <name type="scientific">Rattus norvegicus</name>
    <name type="common">Rat</name>
    <dbReference type="NCBI Taxonomy" id="10116"/>
    <lineage>
        <taxon>Eukaryota</taxon>
        <taxon>Metazoa</taxon>
        <taxon>Chordata</taxon>
        <taxon>Craniata</taxon>
        <taxon>Vertebrata</taxon>
        <taxon>Euteleostomi</taxon>
        <taxon>Mammalia</taxon>
        <taxon>Eutheria</taxon>
        <taxon>Euarchontoglires</taxon>
        <taxon>Glires</taxon>
        <taxon>Rodentia</taxon>
        <taxon>Myomorpha</taxon>
        <taxon>Muroidea</taxon>
        <taxon>Muridae</taxon>
        <taxon>Murinae</taxon>
        <taxon>Rattus</taxon>
    </lineage>
</organism>
<protein>
    <recommendedName>
        <fullName evidence="6">Nedd4 binding protein 3</fullName>
        <shortName evidence="1">N4BP3</shortName>
    </recommendedName>
</protein>
<evidence type="ECO:0000250" key="1">
    <source>
        <dbReference type="UniProtKB" id="O15049"/>
    </source>
</evidence>
<evidence type="ECO:0000255" key="2"/>
<evidence type="ECO:0000256" key="3">
    <source>
        <dbReference type="SAM" id="MobiDB-lite"/>
    </source>
</evidence>
<evidence type="ECO:0000269" key="4">
    <source>
    </source>
</evidence>
<evidence type="ECO:0000305" key="5"/>
<evidence type="ECO:0000312" key="6">
    <source>
        <dbReference type="EMBL" id="ABA06436.1"/>
    </source>
</evidence>
<evidence type="ECO:0000312" key="7">
    <source>
        <dbReference type="RGD" id="1308356"/>
    </source>
</evidence>
<sequence>MATASGPAGIAMGSVGSLLERQDFSPEELRAALAGSRGSRQPDGLLRKGLGQREFFSYLHLPKKDGKTAKRAPRNEPDYTTLYYREHPRAGDFSKTSLPERGRFDKCRIRPSVFKPPVSTGKGFLSMQSLAAHKGQKLWRSNGSLHTLACHPPLSPGPRASQARAQLLHALSLDEGGPEPSLSDSSSGGSFGRSPGTGPSPFSSSLGHINHLGGSLDRASRSPKESGPLAVLSCLPEPPPPYEFSCPTTEEVAVLPDTCEELKRDLGDQDVSNPFTQVLEERQRLWLSELKRLYVDRLHEVAQKAERSERNLQLQLFMAQQEQRRLRKELRAQQGLAPEPRTSGPPMEADPNARPEEEARWEVCQKTAEISLLKQQLREAQAELAQKLAEIFSLKTQLRGSRAQAQAQDAELARLREAVRSLQEQAPREEAPGSCETDDCKSRGLLGEAGGNEAREGAEQLRAELLQERLRGQEQALRFEQERQTWQEEKERVLRYQREIQGSYMDMYRRNQALEQELRVLREPPTSWSPRLESSKI</sequence>